<dbReference type="EC" id="6.3.4.3" evidence="1"/>
<dbReference type="EMBL" id="CP000891">
    <property type="protein sequence ID" value="ABX51090.1"/>
    <property type="molecule type" value="Genomic_DNA"/>
</dbReference>
<dbReference type="RefSeq" id="WP_006084234.1">
    <property type="nucleotide sequence ID" value="NC_009997.1"/>
</dbReference>
<dbReference type="SMR" id="A9L3Z6"/>
<dbReference type="KEGG" id="sbn:Sbal195_3930"/>
<dbReference type="HOGENOM" id="CLU_003601_3_3_6"/>
<dbReference type="UniPathway" id="UPA00193"/>
<dbReference type="Proteomes" id="UP000000770">
    <property type="component" value="Chromosome"/>
</dbReference>
<dbReference type="GO" id="GO:0005524">
    <property type="term" value="F:ATP binding"/>
    <property type="evidence" value="ECO:0007669"/>
    <property type="project" value="UniProtKB-UniRule"/>
</dbReference>
<dbReference type="GO" id="GO:0004329">
    <property type="term" value="F:formate-tetrahydrofolate ligase activity"/>
    <property type="evidence" value="ECO:0007669"/>
    <property type="project" value="UniProtKB-UniRule"/>
</dbReference>
<dbReference type="GO" id="GO:0035999">
    <property type="term" value="P:tetrahydrofolate interconversion"/>
    <property type="evidence" value="ECO:0007669"/>
    <property type="project" value="UniProtKB-UniRule"/>
</dbReference>
<dbReference type="FunFam" id="3.10.410.10:FF:000001">
    <property type="entry name" value="Putative formate--tetrahydrofolate ligase"/>
    <property type="match status" value="1"/>
</dbReference>
<dbReference type="Gene3D" id="3.30.1510.10">
    <property type="entry name" value="Domain 2, N(10)-formyltetrahydrofolate synthetase"/>
    <property type="match status" value="1"/>
</dbReference>
<dbReference type="Gene3D" id="3.10.410.10">
    <property type="entry name" value="Formyltetrahydrofolate synthetase, domain 3"/>
    <property type="match status" value="1"/>
</dbReference>
<dbReference type="Gene3D" id="3.40.50.300">
    <property type="entry name" value="P-loop containing nucleotide triphosphate hydrolases"/>
    <property type="match status" value="1"/>
</dbReference>
<dbReference type="HAMAP" id="MF_01543">
    <property type="entry name" value="FTHFS"/>
    <property type="match status" value="1"/>
</dbReference>
<dbReference type="InterPro" id="IPR000559">
    <property type="entry name" value="Formate_THF_ligase"/>
</dbReference>
<dbReference type="InterPro" id="IPR020628">
    <property type="entry name" value="Formate_THF_ligase_CS"/>
</dbReference>
<dbReference type="InterPro" id="IPR027417">
    <property type="entry name" value="P-loop_NTPase"/>
</dbReference>
<dbReference type="NCBIfam" id="NF010030">
    <property type="entry name" value="PRK13505.1"/>
    <property type="match status" value="1"/>
</dbReference>
<dbReference type="NCBIfam" id="NF010031">
    <property type="entry name" value="PRK13506.1"/>
    <property type="match status" value="1"/>
</dbReference>
<dbReference type="Pfam" id="PF01268">
    <property type="entry name" value="FTHFS"/>
    <property type="match status" value="1"/>
</dbReference>
<dbReference type="SUPFAM" id="SSF52540">
    <property type="entry name" value="P-loop containing nucleoside triphosphate hydrolases"/>
    <property type="match status" value="1"/>
</dbReference>
<dbReference type="PROSITE" id="PS00721">
    <property type="entry name" value="FTHFS_1"/>
    <property type="match status" value="1"/>
</dbReference>
<keyword id="KW-0067">ATP-binding</keyword>
<keyword id="KW-0436">Ligase</keyword>
<keyword id="KW-0547">Nucleotide-binding</keyword>
<keyword id="KW-0554">One-carbon metabolism</keyword>
<sequence length="585" mass="61417">MLTDMDISSRASLKNITEIGVDLGLLPEEMMLFGHTKAKVELSVLQRLAGQRKGKLIIVTAVTPTPHGEGKTVTSIGLTQSLNAIGQKACACIRQPSMGPVFGVKGGAAGGGYAQVVPMQEMNLHLTGDIHAVSSAHNLGAAAIAARLFHEARLGKTEFEAQSGQAFLDIAPNEIRWHRVVDHNDRCLRQIHVGLGDNNGPEYGSSFDITAASELMAILALSHDLADMRVRIGRLVLALNTQGQVITAEDLGVAGAMTAIMADAIKPTLMQTLNGSPCLIHSGPFANIAHGNSSIIADDIALRLADFVVTEGGFGSDMGFEKFCNIKVRQSGQAPAAAVLVTTLKALKANSGLATEVDSNVSNIHVPKINAANINAPDQARLEAGFANLNWHINNVARYGIPVVVAINRFATDSDAELQWLMEAVNASAAFGCEISDAFSQGEAGAIALAQTVVRAAEIESQFKLLYPDEASLEAKLSTLAEVGYGAAGVSLSIEAKQQAQQLTALGYGHLPLCMAKTPLSISHDPSLKGVPKDFVVPVRELVLHAGAGFITALVGNVMTMPGLGLKPGYLKIDIDAKGEIVGLG</sequence>
<proteinExistence type="inferred from homology"/>
<gene>
    <name evidence="1" type="primary">fhs</name>
    <name type="ordered locus">Sbal195_3930</name>
</gene>
<reference key="1">
    <citation type="submission" date="2007-11" db="EMBL/GenBank/DDBJ databases">
        <title>Complete sequence of chromosome of Shewanella baltica OS195.</title>
        <authorList>
            <consortium name="US DOE Joint Genome Institute"/>
            <person name="Copeland A."/>
            <person name="Lucas S."/>
            <person name="Lapidus A."/>
            <person name="Barry K."/>
            <person name="Glavina del Rio T."/>
            <person name="Dalin E."/>
            <person name="Tice H."/>
            <person name="Pitluck S."/>
            <person name="Chain P."/>
            <person name="Malfatti S."/>
            <person name="Shin M."/>
            <person name="Vergez L."/>
            <person name="Schmutz J."/>
            <person name="Larimer F."/>
            <person name="Land M."/>
            <person name="Hauser L."/>
            <person name="Kyrpides N."/>
            <person name="Kim E."/>
            <person name="Brettar I."/>
            <person name="Rodrigues J."/>
            <person name="Konstantinidis K."/>
            <person name="Klappenbach J."/>
            <person name="Hofle M."/>
            <person name="Tiedje J."/>
            <person name="Richardson P."/>
        </authorList>
    </citation>
    <scope>NUCLEOTIDE SEQUENCE [LARGE SCALE GENOMIC DNA]</scope>
    <source>
        <strain>OS195</strain>
    </source>
</reference>
<protein>
    <recommendedName>
        <fullName evidence="1">Formate--tetrahydrofolate ligase</fullName>
        <ecNumber evidence="1">6.3.4.3</ecNumber>
    </recommendedName>
    <alternativeName>
        <fullName evidence="1">Formyltetrahydrofolate synthetase</fullName>
        <shortName evidence="1">FHS</shortName>
        <shortName evidence="1">FTHFS</shortName>
    </alternativeName>
</protein>
<feature type="chain" id="PRO_1000087655" description="Formate--tetrahydrofolate ligase">
    <location>
        <begin position="1"/>
        <end position="585"/>
    </location>
</feature>
<feature type="binding site" evidence="1">
    <location>
        <begin position="65"/>
        <end position="72"/>
    </location>
    <ligand>
        <name>ATP</name>
        <dbReference type="ChEBI" id="CHEBI:30616"/>
    </ligand>
</feature>
<comment type="catalytic activity">
    <reaction evidence="1">
        <text>(6S)-5,6,7,8-tetrahydrofolate + formate + ATP = (6R)-10-formyltetrahydrofolate + ADP + phosphate</text>
        <dbReference type="Rhea" id="RHEA:20221"/>
        <dbReference type="ChEBI" id="CHEBI:15740"/>
        <dbReference type="ChEBI" id="CHEBI:30616"/>
        <dbReference type="ChEBI" id="CHEBI:43474"/>
        <dbReference type="ChEBI" id="CHEBI:57453"/>
        <dbReference type="ChEBI" id="CHEBI:195366"/>
        <dbReference type="ChEBI" id="CHEBI:456216"/>
        <dbReference type="EC" id="6.3.4.3"/>
    </reaction>
</comment>
<comment type="pathway">
    <text evidence="1">One-carbon metabolism; tetrahydrofolate interconversion.</text>
</comment>
<comment type="similarity">
    <text evidence="1">Belongs to the formate--tetrahydrofolate ligase family.</text>
</comment>
<evidence type="ECO:0000255" key="1">
    <source>
        <dbReference type="HAMAP-Rule" id="MF_01543"/>
    </source>
</evidence>
<accession>A9L3Z6</accession>
<organism>
    <name type="scientific">Shewanella baltica (strain OS195)</name>
    <dbReference type="NCBI Taxonomy" id="399599"/>
    <lineage>
        <taxon>Bacteria</taxon>
        <taxon>Pseudomonadati</taxon>
        <taxon>Pseudomonadota</taxon>
        <taxon>Gammaproteobacteria</taxon>
        <taxon>Alteromonadales</taxon>
        <taxon>Shewanellaceae</taxon>
        <taxon>Shewanella</taxon>
    </lineage>
</organism>
<name>FTHS_SHEB9</name>